<proteinExistence type="inferred from homology"/>
<comment type="catalytic activity">
    <reaction evidence="1">
        <text>urea + 2 H2O + H(+) = hydrogencarbonate + 2 NH4(+)</text>
        <dbReference type="Rhea" id="RHEA:20557"/>
        <dbReference type="ChEBI" id="CHEBI:15377"/>
        <dbReference type="ChEBI" id="CHEBI:15378"/>
        <dbReference type="ChEBI" id="CHEBI:16199"/>
        <dbReference type="ChEBI" id="CHEBI:17544"/>
        <dbReference type="ChEBI" id="CHEBI:28938"/>
        <dbReference type="EC" id="3.5.1.5"/>
    </reaction>
</comment>
<comment type="pathway">
    <text evidence="1">Nitrogen metabolism; urea degradation; CO(2) and NH(3) from urea (urease route): step 1/1.</text>
</comment>
<comment type="subunit">
    <text evidence="1">Heterotrimer of UreA (gamma), UreB (beta) and UreC (alpha) subunits. Three heterotrimers associate to form the active enzyme.</text>
</comment>
<comment type="subcellular location">
    <subcellularLocation>
        <location evidence="1">Cytoplasm</location>
    </subcellularLocation>
</comment>
<comment type="similarity">
    <text evidence="1">Belongs to the urease beta subunit family.</text>
</comment>
<name>URE2_BURTA</name>
<feature type="chain" id="PRO_0000234244" description="Urease subunit beta">
    <location>
        <begin position="1"/>
        <end position="101"/>
    </location>
</feature>
<reference key="1">
    <citation type="journal article" date="2005" name="BMC Genomics">
        <title>Bacterial genome adaptation to niches: divergence of the potential virulence genes in three Burkholderia species of different survival strategies.</title>
        <authorList>
            <person name="Kim H.S."/>
            <person name="Schell M.A."/>
            <person name="Yu Y."/>
            <person name="Ulrich R.L."/>
            <person name="Sarria S.H."/>
            <person name="Nierman W.C."/>
            <person name="DeShazer D."/>
        </authorList>
    </citation>
    <scope>NUCLEOTIDE SEQUENCE [LARGE SCALE GENOMIC DNA]</scope>
    <source>
        <strain>ATCC 700388 / DSM 13276 / CCUG 48851 / CIP 106301 / E264</strain>
    </source>
</reference>
<sequence length="101" mass="10858">MIPGELVTGDGEHELNAGRRTIELVVANTGDRPVQVGSHYHFHEVNDALSFDRAAARGFRLNIAAGTAVRFEPGQTRTVELVELAGARAVYGFQGKVMGPL</sequence>
<gene>
    <name evidence="1" type="primary">ureB</name>
    <name type="ordered locus">BTH_I1497</name>
</gene>
<accession>Q2SYF6</accession>
<organism>
    <name type="scientific">Burkholderia thailandensis (strain ATCC 700388 / DSM 13276 / CCUG 48851 / CIP 106301 / E264)</name>
    <dbReference type="NCBI Taxonomy" id="271848"/>
    <lineage>
        <taxon>Bacteria</taxon>
        <taxon>Pseudomonadati</taxon>
        <taxon>Pseudomonadota</taxon>
        <taxon>Betaproteobacteria</taxon>
        <taxon>Burkholderiales</taxon>
        <taxon>Burkholderiaceae</taxon>
        <taxon>Burkholderia</taxon>
        <taxon>pseudomallei group</taxon>
    </lineage>
</organism>
<dbReference type="EC" id="3.5.1.5" evidence="1"/>
<dbReference type="EMBL" id="CP000086">
    <property type="protein sequence ID" value="ABC37256.1"/>
    <property type="molecule type" value="Genomic_DNA"/>
</dbReference>
<dbReference type="RefSeq" id="WP_009889614.1">
    <property type="nucleotide sequence ID" value="NZ_CP008785.1"/>
</dbReference>
<dbReference type="SMR" id="Q2SYF6"/>
<dbReference type="GeneID" id="45121238"/>
<dbReference type="KEGG" id="bte:BTH_I1497"/>
<dbReference type="HOGENOM" id="CLU_129707_1_1_4"/>
<dbReference type="UniPathway" id="UPA00258">
    <property type="reaction ID" value="UER00370"/>
</dbReference>
<dbReference type="Proteomes" id="UP000001930">
    <property type="component" value="Chromosome I"/>
</dbReference>
<dbReference type="GO" id="GO:0035550">
    <property type="term" value="C:urease complex"/>
    <property type="evidence" value="ECO:0007669"/>
    <property type="project" value="InterPro"/>
</dbReference>
<dbReference type="GO" id="GO:0009039">
    <property type="term" value="F:urease activity"/>
    <property type="evidence" value="ECO:0007669"/>
    <property type="project" value="UniProtKB-UniRule"/>
</dbReference>
<dbReference type="GO" id="GO:0043419">
    <property type="term" value="P:urea catabolic process"/>
    <property type="evidence" value="ECO:0007669"/>
    <property type="project" value="UniProtKB-UniRule"/>
</dbReference>
<dbReference type="CDD" id="cd00407">
    <property type="entry name" value="Urease_beta"/>
    <property type="match status" value="1"/>
</dbReference>
<dbReference type="FunFam" id="2.10.150.10:FF:000001">
    <property type="entry name" value="Urease subunit beta"/>
    <property type="match status" value="1"/>
</dbReference>
<dbReference type="Gene3D" id="2.10.150.10">
    <property type="entry name" value="Urease, beta subunit"/>
    <property type="match status" value="1"/>
</dbReference>
<dbReference type="HAMAP" id="MF_01954">
    <property type="entry name" value="Urease_beta"/>
    <property type="match status" value="1"/>
</dbReference>
<dbReference type="InterPro" id="IPR002019">
    <property type="entry name" value="Urease_beta-like"/>
</dbReference>
<dbReference type="InterPro" id="IPR036461">
    <property type="entry name" value="Urease_betasu_sf"/>
</dbReference>
<dbReference type="InterPro" id="IPR050069">
    <property type="entry name" value="Urease_subunit"/>
</dbReference>
<dbReference type="NCBIfam" id="NF009682">
    <property type="entry name" value="PRK13203.1"/>
    <property type="match status" value="1"/>
</dbReference>
<dbReference type="NCBIfam" id="TIGR00192">
    <property type="entry name" value="urease_beta"/>
    <property type="match status" value="1"/>
</dbReference>
<dbReference type="PANTHER" id="PTHR33569">
    <property type="entry name" value="UREASE"/>
    <property type="match status" value="1"/>
</dbReference>
<dbReference type="PANTHER" id="PTHR33569:SF1">
    <property type="entry name" value="UREASE"/>
    <property type="match status" value="1"/>
</dbReference>
<dbReference type="Pfam" id="PF00699">
    <property type="entry name" value="Urease_beta"/>
    <property type="match status" value="1"/>
</dbReference>
<dbReference type="SUPFAM" id="SSF51278">
    <property type="entry name" value="Urease, beta-subunit"/>
    <property type="match status" value="1"/>
</dbReference>
<keyword id="KW-0963">Cytoplasm</keyword>
<keyword id="KW-0378">Hydrolase</keyword>
<protein>
    <recommendedName>
        <fullName evidence="1">Urease subunit beta</fullName>
        <ecNumber evidence="1">3.5.1.5</ecNumber>
    </recommendedName>
    <alternativeName>
        <fullName evidence="1">Urea amidohydrolase subunit beta</fullName>
    </alternativeName>
</protein>
<evidence type="ECO:0000255" key="1">
    <source>
        <dbReference type="HAMAP-Rule" id="MF_01954"/>
    </source>
</evidence>